<reference key="1">
    <citation type="journal article" date="2011" name="Genome Biol.">
        <title>Comparative and functional genomics provide insights into the pathogenicity of dermatophytic fungi.</title>
        <authorList>
            <person name="Burmester A."/>
            <person name="Shelest E."/>
            <person name="Gloeckner G."/>
            <person name="Heddergott C."/>
            <person name="Schindler S."/>
            <person name="Staib P."/>
            <person name="Heidel A."/>
            <person name="Felder M."/>
            <person name="Petzold A."/>
            <person name="Szafranski K."/>
            <person name="Feuermann M."/>
            <person name="Pedruzzi I."/>
            <person name="Priebe S."/>
            <person name="Groth M."/>
            <person name="Winkler R."/>
            <person name="Li W."/>
            <person name="Kniemeyer O."/>
            <person name="Schroeckh V."/>
            <person name="Hertweck C."/>
            <person name="Hube B."/>
            <person name="White T.C."/>
            <person name="Platzer M."/>
            <person name="Guthke R."/>
            <person name="Heitman J."/>
            <person name="Woestemeyer J."/>
            <person name="Zipfel P.F."/>
            <person name="Monod M."/>
            <person name="Brakhage A.A."/>
        </authorList>
    </citation>
    <scope>NUCLEOTIDE SEQUENCE [LARGE SCALE GENOMIC DNA]</scope>
    <source>
        <strain>ATCC MYA-4681 / CBS 112371</strain>
    </source>
</reference>
<name>GPI12_ARTBC</name>
<feature type="chain" id="PRO_0000434500" description="N-acetylglucosaminyl-phosphatidylinositol de-N-acetylase" evidence="2">
    <location>
        <begin position="1"/>
        <end position="335"/>
    </location>
</feature>
<feature type="transmembrane region" description="Helical" evidence="2">
    <location>
        <begin position="3"/>
        <end position="23"/>
    </location>
</feature>
<feature type="glycosylation site" description="N-linked (GlcNAc...) asparagine" evidence="3">
    <location>
        <position position="128"/>
    </location>
</feature>
<feature type="glycosylation site" description="N-linked (GlcNAc...) asparagine" evidence="3">
    <location>
        <position position="153"/>
    </location>
</feature>
<organism>
    <name type="scientific">Arthroderma benhamiae (strain ATCC MYA-4681 / CBS 112371)</name>
    <name type="common">Trichophyton mentagrophytes</name>
    <dbReference type="NCBI Taxonomy" id="663331"/>
    <lineage>
        <taxon>Eukaryota</taxon>
        <taxon>Fungi</taxon>
        <taxon>Dikarya</taxon>
        <taxon>Ascomycota</taxon>
        <taxon>Pezizomycotina</taxon>
        <taxon>Eurotiomycetes</taxon>
        <taxon>Eurotiomycetidae</taxon>
        <taxon>Onygenales</taxon>
        <taxon>Arthrodermataceae</taxon>
        <taxon>Trichophyton</taxon>
    </lineage>
</organism>
<evidence type="ECO:0000250" key="1">
    <source>
        <dbReference type="UniProtKB" id="P23797"/>
    </source>
</evidence>
<evidence type="ECO:0000255" key="2"/>
<evidence type="ECO:0000255" key="3">
    <source>
        <dbReference type="PROSITE-ProRule" id="PRU00498"/>
    </source>
</evidence>
<evidence type="ECO:0000305" key="4"/>
<dbReference type="EC" id="3.5.1.89" evidence="1"/>
<dbReference type="EMBL" id="ABSU01000034">
    <property type="protein sequence ID" value="EFE30057.1"/>
    <property type="molecule type" value="Genomic_DNA"/>
</dbReference>
<dbReference type="RefSeq" id="XP_003010697.1">
    <property type="nucleotide sequence ID" value="XM_003010651.1"/>
</dbReference>
<dbReference type="STRING" id="663331.D4B4K9"/>
<dbReference type="GeneID" id="9524810"/>
<dbReference type="KEGG" id="abe:ARB_03399"/>
<dbReference type="eggNOG" id="KOG3332">
    <property type="taxonomic scope" value="Eukaryota"/>
</dbReference>
<dbReference type="HOGENOM" id="CLU_034979_0_0_1"/>
<dbReference type="OMA" id="YVLESVN"/>
<dbReference type="UniPathway" id="UPA00196"/>
<dbReference type="Proteomes" id="UP000008866">
    <property type="component" value="Unassembled WGS sequence"/>
</dbReference>
<dbReference type="GO" id="GO:0005789">
    <property type="term" value="C:endoplasmic reticulum membrane"/>
    <property type="evidence" value="ECO:0007669"/>
    <property type="project" value="UniProtKB-SubCell"/>
</dbReference>
<dbReference type="GO" id="GO:0000225">
    <property type="term" value="F:N-acetylglucosaminylphosphatidylinositol deacetylase activity"/>
    <property type="evidence" value="ECO:0007669"/>
    <property type="project" value="UniProtKB-EC"/>
</dbReference>
<dbReference type="GO" id="GO:0006506">
    <property type="term" value="P:GPI anchor biosynthetic process"/>
    <property type="evidence" value="ECO:0007669"/>
    <property type="project" value="UniProtKB-UniPathway"/>
</dbReference>
<dbReference type="Gene3D" id="3.40.50.10320">
    <property type="entry name" value="LmbE-like"/>
    <property type="match status" value="1"/>
</dbReference>
<dbReference type="InterPro" id="IPR003737">
    <property type="entry name" value="GlcNAc_PI_deacetylase-related"/>
</dbReference>
<dbReference type="InterPro" id="IPR024078">
    <property type="entry name" value="LmbE-like_dom_sf"/>
</dbReference>
<dbReference type="PANTHER" id="PTHR12993:SF11">
    <property type="entry name" value="N-ACETYLGLUCOSAMINYL-PHOSPHATIDYLINOSITOL DE-N-ACETYLASE"/>
    <property type="match status" value="1"/>
</dbReference>
<dbReference type="PANTHER" id="PTHR12993">
    <property type="entry name" value="N-ACETYLGLUCOSAMINYL-PHOSPHATIDYLINOSITOL DE-N-ACETYLASE-RELATED"/>
    <property type="match status" value="1"/>
</dbReference>
<dbReference type="Pfam" id="PF02585">
    <property type="entry name" value="PIG-L"/>
    <property type="match status" value="1"/>
</dbReference>
<dbReference type="SUPFAM" id="SSF102588">
    <property type="entry name" value="LmbE-like"/>
    <property type="match status" value="1"/>
</dbReference>
<keyword id="KW-0256">Endoplasmic reticulum</keyword>
<keyword id="KW-0325">Glycoprotein</keyword>
<keyword id="KW-0337">GPI-anchor biosynthesis</keyword>
<keyword id="KW-0378">Hydrolase</keyword>
<keyword id="KW-0472">Membrane</keyword>
<keyword id="KW-1185">Reference proteome</keyword>
<keyword id="KW-0735">Signal-anchor</keyword>
<keyword id="KW-0812">Transmembrane</keyword>
<keyword id="KW-1133">Transmembrane helix</keyword>
<protein>
    <recommendedName>
        <fullName evidence="1">N-acetylglucosaminyl-phosphatidylinositol de-N-acetylase</fullName>
        <ecNumber evidence="1">3.5.1.89</ecNumber>
    </recommendedName>
</protein>
<sequence length="335" mass="36646">MNSAFTFLSLAIFPLALFIFWTLSATGPSSPLGRGFPTLTNKRICLLIAHPDDEAMFFAPTLLALTKPELGNHVKILCLSSGMCALLMVLDSASGWFLIYQITGDAAGLGHIRKQELQKSALRLGLRNESDVFIVDDPSRFPDSMTATWSEENVSGLLASAFAPQLAAQASSQSAPMATIDILLTFDQSGVSYHPNHRSLYHGARAFLKALMRGNSGHPCPVTLYTLTSTTLARKYIGVFDAPIAMLSGVISNAFGGSGDRDALSTSPSKKTQELRGIREPPPANRLLFVNSVDDWLSGWKAMVYAHKSQMVWFRWGWITVGRYMVVNDLKKELV</sequence>
<accession>D4B4K9</accession>
<proteinExistence type="inferred from homology"/>
<gene>
    <name type="ORF">ARB_03399</name>
</gene>
<comment type="function">
    <text evidence="1">Involved in the second step of GPI biosynthesis. De-N-acetylation of N-acetylglucosaminyl-phosphatidylinositol (By similarity).</text>
</comment>
<comment type="catalytic activity">
    <reaction evidence="1">
        <text>a 6-(N-acetyl-alpha-D-glucosaminyl)-1-(1,2-diacyl-sn-glycero-3-phospho)-1D-myo-inositol + H2O = a 6-(alpha-D-glucosaminyl)-1-(1,2-diacyl-sn-glycero-3-phospho)-1D-myo-inositol + acetate</text>
        <dbReference type="Rhea" id="RHEA:11660"/>
        <dbReference type="ChEBI" id="CHEBI:15377"/>
        <dbReference type="ChEBI" id="CHEBI:30089"/>
        <dbReference type="ChEBI" id="CHEBI:57265"/>
        <dbReference type="ChEBI" id="CHEBI:57997"/>
        <dbReference type="EC" id="3.5.1.89"/>
    </reaction>
</comment>
<comment type="pathway">
    <text evidence="1">Glycolipid biosynthesis; glycosylphosphatidylinositol-anchor biosynthesis.</text>
</comment>
<comment type="subcellular location">
    <subcellularLocation>
        <location evidence="4">Endoplasmic reticulum membrane</location>
        <topology evidence="4">Single-pass type II membrane protein</topology>
    </subcellularLocation>
</comment>
<comment type="similarity">
    <text evidence="4">Belongs to the PIGL family.</text>
</comment>